<organism>
    <name type="scientific">Drosophila melanogaster</name>
    <name type="common">Fruit fly</name>
    <dbReference type="NCBI Taxonomy" id="7227"/>
    <lineage>
        <taxon>Eukaryota</taxon>
        <taxon>Metazoa</taxon>
        <taxon>Ecdysozoa</taxon>
        <taxon>Arthropoda</taxon>
        <taxon>Hexapoda</taxon>
        <taxon>Insecta</taxon>
        <taxon>Pterygota</taxon>
        <taxon>Neoptera</taxon>
        <taxon>Endopterygota</taxon>
        <taxon>Diptera</taxon>
        <taxon>Brachycera</taxon>
        <taxon>Muscomorpha</taxon>
        <taxon>Ephydroidea</taxon>
        <taxon>Drosophilidae</taxon>
        <taxon>Drosophila</taxon>
        <taxon>Sophophora</taxon>
    </lineage>
</organism>
<keyword id="KW-0025">Alternative splicing</keyword>
<keyword id="KW-0156">Chromatin regulator</keyword>
<keyword id="KW-0539">Nucleus</keyword>
<keyword id="KW-0597">Phosphoprotein</keyword>
<keyword id="KW-1185">Reference proteome</keyword>
<keyword id="KW-0677">Repeat</keyword>
<keyword id="KW-0678">Repressor</keyword>
<keyword id="KW-0804">Transcription</keyword>
<keyword id="KW-0805">Transcription regulation</keyword>
<keyword id="KW-0853">WD repeat</keyword>
<dbReference type="EMBL" id="AF031081">
    <property type="protein sequence ID" value="AAC48360.1"/>
    <property type="status" value="ALT_FRAME"/>
    <property type="molecule type" value="mRNA"/>
</dbReference>
<dbReference type="EMBL" id="AJ222709">
    <property type="protein sequence ID" value="CAA10954.1"/>
    <property type="molecule type" value="mRNA"/>
</dbReference>
<dbReference type="EMBL" id="AF071881">
    <property type="protein sequence ID" value="AAC64041.1"/>
    <property type="molecule type" value="mRNA"/>
</dbReference>
<dbReference type="EMBL" id="AE014298">
    <property type="protein sequence ID" value="AAF46267.1"/>
    <property type="molecule type" value="Genomic_DNA"/>
</dbReference>
<dbReference type="EMBL" id="AY069414">
    <property type="protein sequence ID" value="AAL39559.1"/>
    <property type="molecule type" value="mRNA"/>
</dbReference>
<dbReference type="EMBL" id="BT016167">
    <property type="protein sequence ID" value="AAV37052.1"/>
    <property type="molecule type" value="mRNA"/>
</dbReference>
<dbReference type="PIR" id="A59246">
    <property type="entry name" value="A59246"/>
</dbReference>
<dbReference type="RefSeq" id="NP_572401.2">
    <molecule id="O17468-1"/>
    <property type="nucleotide sequence ID" value="NM_132173.3"/>
</dbReference>
<dbReference type="SMR" id="O17468"/>
<dbReference type="BioGRID" id="58155">
    <property type="interactions" value="24"/>
</dbReference>
<dbReference type="FunCoup" id="O17468">
    <property type="interactions" value="2130"/>
</dbReference>
<dbReference type="IntAct" id="O17468">
    <property type="interactions" value="4"/>
</dbReference>
<dbReference type="STRING" id="7227.FBpp0071028"/>
<dbReference type="GlyGen" id="O17468">
    <property type="glycosylation" value="2 sites"/>
</dbReference>
<dbReference type="iPTMnet" id="O17468"/>
<dbReference type="PaxDb" id="7227-FBpp0071028"/>
<dbReference type="EnsemblMetazoa" id="FBtr0071070">
    <molecule id="O17468-1"/>
    <property type="protein sequence ID" value="FBpp0071028"/>
    <property type="gene ID" value="FBgn0022786"/>
</dbReference>
<dbReference type="GeneID" id="31680"/>
<dbReference type="KEGG" id="dme:Dmel_CG12153"/>
<dbReference type="AGR" id="FB:FBgn0022786"/>
<dbReference type="CTD" id="7290"/>
<dbReference type="FlyBase" id="FBgn0022786">
    <property type="gene designation" value="Hira"/>
</dbReference>
<dbReference type="VEuPathDB" id="VectorBase:FBgn0022786"/>
<dbReference type="eggNOG" id="KOG0973">
    <property type="taxonomic scope" value="Eukaryota"/>
</dbReference>
<dbReference type="GeneTree" id="ENSGT00550000074919"/>
<dbReference type="HOGENOM" id="CLU_004372_3_0_1"/>
<dbReference type="InParanoid" id="O17468"/>
<dbReference type="OMA" id="AWVHHDD"/>
<dbReference type="OrthoDB" id="1741719at2759"/>
<dbReference type="PhylomeDB" id="O17468"/>
<dbReference type="SignaLink" id="O17468"/>
<dbReference type="BioGRID-ORCS" id="31680">
    <property type="hits" value="0 hits in 1 CRISPR screen"/>
</dbReference>
<dbReference type="ChiTaRS" id="Hira">
    <property type="organism name" value="fly"/>
</dbReference>
<dbReference type="GenomeRNAi" id="31680"/>
<dbReference type="PRO" id="PR:O17468"/>
<dbReference type="Proteomes" id="UP000000803">
    <property type="component" value="Chromosome X"/>
</dbReference>
<dbReference type="Bgee" id="FBgn0022786">
    <property type="expression patterns" value="Expressed in adult Malpighian tubule principal cell of lower segment in Malpighian tubule and 28 other cell types or tissues"/>
</dbReference>
<dbReference type="GO" id="GO:0000785">
    <property type="term" value="C:chromatin"/>
    <property type="evidence" value="ECO:0000318"/>
    <property type="project" value="GO_Central"/>
</dbReference>
<dbReference type="GO" id="GO:0042585">
    <property type="term" value="C:germinal vesicle"/>
    <property type="evidence" value="ECO:0000314"/>
    <property type="project" value="FlyBase"/>
</dbReference>
<dbReference type="GO" id="GO:0000417">
    <property type="term" value="C:HIR complex"/>
    <property type="evidence" value="ECO:0000318"/>
    <property type="project" value="GO_Central"/>
</dbReference>
<dbReference type="GO" id="GO:0001673">
    <property type="term" value="C:male germ cell nucleus"/>
    <property type="evidence" value="ECO:0000314"/>
    <property type="project" value="UniProtKB"/>
</dbReference>
<dbReference type="GO" id="GO:0005634">
    <property type="term" value="C:nucleus"/>
    <property type="evidence" value="ECO:0000314"/>
    <property type="project" value="FlyBase"/>
</dbReference>
<dbReference type="GO" id="GO:0003682">
    <property type="term" value="F:chromatin binding"/>
    <property type="evidence" value="ECO:0000314"/>
    <property type="project" value="UniProtKB"/>
</dbReference>
<dbReference type="GO" id="GO:0140713">
    <property type="term" value="F:histone chaperone activity"/>
    <property type="evidence" value="ECO:0000315"/>
    <property type="project" value="FlyBase"/>
</dbReference>
<dbReference type="GO" id="GO:0006325">
    <property type="term" value="P:chromatin organization"/>
    <property type="evidence" value="ECO:0000315"/>
    <property type="project" value="FlyBase"/>
</dbReference>
<dbReference type="GO" id="GO:0006338">
    <property type="term" value="P:chromatin remodeling"/>
    <property type="evidence" value="ECO:0000318"/>
    <property type="project" value="GO_Central"/>
</dbReference>
<dbReference type="GO" id="GO:0006351">
    <property type="term" value="P:DNA-templated transcription"/>
    <property type="evidence" value="ECO:0007669"/>
    <property type="project" value="InterPro"/>
</dbReference>
<dbReference type="GO" id="GO:0006355">
    <property type="term" value="P:regulation of DNA-templated transcription"/>
    <property type="evidence" value="ECO:0007669"/>
    <property type="project" value="InterPro"/>
</dbReference>
<dbReference type="GO" id="GO:0035041">
    <property type="term" value="P:sperm DNA decondensation"/>
    <property type="evidence" value="ECO:0000315"/>
    <property type="project" value="FlyBase"/>
</dbReference>
<dbReference type="CDD" id="cd00200">
    <property type="entry name" value="WD40"/>
    <property type="match status" value="1"/>
</dbReference>
<dbReference type="FunFam" id="2.130.10.10:FF:001071">
    <property type="entry name" value="Protein HIRA"/>
    <property type="match status" value="1"/>
</dbReference>
<dbReference type="Gene3D" id="2.130.10.10">
    <property type="entry name" value="YVTN repeat-like/Quinoprotein amine dehydrogenase"/>
    <property type="match status" value="3"/>
</dbReference>
<dbReference type="InterPro" id="IPR055410">
    <property type="entry name" value="CAF1B_HIR1_beta-prop"/>
</dbReference>
<dbReference type="InterPro" id="IPR020472">
    <property type="entry name" value="G-protein_beta_WD-40_rep"/>
</dbReference>
<dbReference type="InterPro" id="IPR031120">
    <property type="entry name" value="HIR1-like"/>
</dbReference>
<dbReference type="InterPro" id="IPR011494">
    <property type="entry name" value="HIRA-like_C"/>
</dbReference>
<dbReference type="InterPro" id="IPR019015">
    <property type="entry name" value="HIRA_B_motif"/>
</dbReference>
<dbReference type="InterPro" id="IPR015943">
    <property type="entry name" value="WD40/YVTN_repeat-like_dom_sf"/>
</dbReference>
<dbReference type="InterPro" id="IPR036322">
    <property type="entry name" value="WD40_repeat_dom_sf"/>
</dbReference>
<dbReference type="InterPro" id="IPR001680">
    <property type="entry name" value="WD40_rpt"/>
</dbReference>
<dbReference type="PANTHER" id="PTHR13831">
    <property type="entry name" value="MEMBER OF THE HIR1 FAMILY OF WD-REPEAT PROTEINS"/>
    <property type="match status" value="1"/>
</dbReference>
<dbReference type="PANTHER" id="PTHR13831:SF0">
    <property type="entry name" value="PROTEIN HIRA"/>
    <property type="match status" value="1"/>
</dbReference>
<dbReference type="Pfam" id="PF24105">
    <property type="entry name" value="Beta-prop_CAF1B_HIR1"/>
    <property type="match status" value="1"/>
</dbReference>
<dbReference type="Pfam" id="PF07569">
    <property type="entry name" value="Hira"/>
    <property type="match status" value="1"/>
</dbReference>
<dbReference type="Pfam" id="PF09453">
    <property type="entry name" value="HIRA_B"/>
    <property type="match status" value="1"/>
</dbReference>
<dbReference type="Pfam" id="PF00400">
    <property type="entry name" value="WD40"/>
    <property type="match status" value="1"/>
</dbReference>
<dbReference type="PRINTS" id="PR00320">
    <property type="entry name" value="GPROTEINBRPT"/>
</dbReference>
<dbReference type="SMART" id="SM00320">
    <property type="entry name" value="WD40"/>
    <property type="match status" value="8"/>
</dbReference>
<dbReference type="SUPFAM" id="SSF50978">
    <property type="entry name" value="WD40 repeat-like"/>
    <property type="match status" value="2"/>
</dbReference>
<dbReference type="PROSITE" id="PS00678">
    <property type="entry name" value="WD_REPEATS_1"/>
    <property type="match status" value="1"/>
</dbReference>
<dbReference type="PROSITE" id="PS50082">
    <property type="entry name" value="WD_REPEATS_2"/>
    <property type="match status" value="3"/>
</dbReference>
<dbReference type="PROSITE" id="PS50294">
    <property type="entry name" value="WD_REPEATS_REGION"/>
    <property type="match status" value="1"/>
</dbReference>
<sequence length="1047" mass="113415">MRLLKPAWVHHDDKQIFSVDIHKDCTKFATGGQGSDCGRVVIWNLLPVLSDKAEFDADVPKMLCQMDQHLACVNCVRWSQNGQNLASGSDDKLIMIWRKSAGSSGVFGTGGMQKNHESWKCFYTLRGHDGDVLDLAWSPNDVYLASCSIDNTVIIWDAQAFPHSVATLKGHTGLVKGVSWDPLGRFLASQSDDRSIKIWNTMNWSLSHTITEPFEECGGTTHILRLSWSPDGQYLVSAHAMNGGGPTAQIIEREGWKCDKDFVGHRKAVTCVRFHNSILSRQENDGSPSKPLQYCCLAVGSRDRSLSVWMTALQRPMVVIHELFNASILDLTWGPQECLLMACSVDGSIACLKFTEEELGKAISEEEQNAIIRKMYGKNYVNGLGKSAPVLEHPQRLLLPQGDKPTKFPLSNNNEANQRPISKQTETRTKDGKRRITPMFIPLHEDGPTSLSMNIVSSSGSSTTALTSCSAAIGTLPAAAPTESAATPLMPLEPLVSKIDLGRLDSRLKTQPASQRRQSLPFDPGQSNELLRTPRLEEHQSSTCSPSNLNVTATGKSEFVKAALDYRLHVSNGHLKTQHGMLAKVTASDSKEMLWEFYVGSPLVNLNLCEKYAMLCSLDGSMRLISMETGCPVFPAISLTSSAVHCAFSPDNSLVGVLTECGLLRIWDIAKKVVSLAAGCLELLNKHGTAAQFSVTNQGMPLIGFPSGNSYSYSTSLQSWLVLATKDAIMYHGIRGTLPRDMDQMQQKFPLLSMQASSQNYFSFTGSMELRHSESWQQCAKIRFIENQIKLCEALQSLDELQHWHKMLTFQLATHGSEKRMRVFLDDLLSMPEPGISQFVPKLELMQCVLDTLKPHSEWNRLHSEYTELLKECKSERQKDIFATPAPPQQKTASSAGSSPRSGEATGEEVTEKDGATAVAAAVVAGSRMAVTTGTSTTTTTTASSSLSSSGSSSSTSGSGSSSSSSSTSSLSVPQPAPSLSPEIQTLDSPTVCIDDEILSASSSLPPLDTSPVEVSPASTSGGAASTSPAASVAGSAPVSSSKTDQT</sequence>
<gene>
    <name type="primary">Hira</name>
    <name type="synonym">Dhh</name>
    <name type="synonym">ssm</name>
    <name type="ORF">CG12153</name>
</gene>
<evidence type="ECO:0000250" key="1"/>
<evidence type="ECO:0000256" key="2">
    <source>
        <dbReference type="SAM" id="MobiDB-lite"/>
    </source>
</evidence>
<evidence type="ECO:0000269" key="3">
    <source>
    </source>
</evidence>
<evidence type="ECO:0000269" key="4">
    <source>
    </source>
</evidence>
<evidence type="ECO:0000269" key="5">
    <source>
    </source>
</evidence>
<evidence type="ECO:0000269" key="6">
    <source>
    </source>
</evidence>
<evidence type="ECO:0000269" key="7">
    <source>
    </source>
</evidence>
<evidence type="ECO:0000269" key="8">
    <source>
    </source>
</evidence>
<evidence type="ECO:0000269" key="9">
    <source>
    </source>
</evidence>
<evidence type="ECO:0000269" key="10">
    <source ref="10"/>
</evidence>
<evidence type="ECO:0000303" key="11">
    <source>
    </source>
</evidence>
<evidence type="ECO:0000303" key="12">
    <source>
    </source>
</evidence>
<evidence type="ECO:0000305" key="13"/>
<reference key="1">
    <citation type="journal article" date="1998" name="Gene">
        <title>Isolation and characterization of a new gene encoding a member of the HIRA family of proteins from Drosophila melanogaster.</title>
        <authorList>
            <person name="Kirov N."/>
            <person name="Shtilbans A."/>
            <person name="Rushlow C."/>
        </authorList>
    </citation>
    <scope>NUCLEOTIDE SEQUENCE [MRNA] (ISOFORM 1)</scope>
    <scope>DEVELOPMENTAL STAGE</scope>
    <source>
        <tissue>Embryo</tissue>
    </source>
</reference>
<reference key="2">
    <citation type="journal article" date="1998" name="Biochem. Biophys. Res. Commun.">
        <title>Cloning, chromosome mapping and expression analysis of the HIRA gene from Drosophila melanogaster.</title>
        <authorList>
            <person name="Llevadot R."/>
            <person name="Marques G."/>
            <person name="Pritchard M."/>
            <person name="Estivill X."/>
            <person name="Ferrus A."/>
            <person name="Scambler P."/>
        </authorList>
    </citation>
    <scope>NUCLEOTIDE SEQUENCE [MRNA] (ISOFORMS 1 AND 2)</scope>
    <scope>ALTERNATIVE SPLICING</scope>
    <scope>DEVELOPMENTAL STAGE</scope>
    <source>
        <tissue>Embryo</tissue>
    </source>
</reference>
<reference key="3">
    <citation type="journal article" date="2000" name="Science">
        <title>The genome sequence of Drosophila melanogaster.</title>
        <authorList>
            <person name="Adams M.D."/>
            <person name="Celniker S.E."/>
            <person name="Holt R.A."/>
            <person name="Evans C.A."/>
            <person name="Gocayne J.D."/>
            <person name="Amanatides P.G."/>
            <person name="Scherer S.E."/>
            <person name="Li P.W."/>
            <person name="Hoskins R.A."/>
            <person name="Galle R.F."/>
            <person name="George R.A."/>
            <person name="Lewis S.E."/>
            <person name="Richards S."/>
            <person name="Ashburner M."/>
            <person name="Henderson S.N."/>
            <person name="Sutton G.G."/>
            <person name="Wortman J.R."/>
            <person name="Yandell M.D."/>
            <person name="Zhang Q."/>
            <person name="Chen L.X."/>
            <person name="Brandon R.C."/>
            <person name="Rogers Y.-H.C."/>
            <person name="Blazej R.G."/>
            <person name="Champe M."/>
            <person name="Pfeiffer B.D."/>
            <person name="Wan K.H."/>
            <person name="Doyle C."/>
            <person name="Baxter E.G."/>
            <person name="Helt G."/>
            <person name="Nelson C.R."/>
            <person name="Miklos G.L.G."/>
            <person name="Abril J.F."/>
            <person name="Agbayani A."/>
            <person name="An H.-J."/>
            <person name="Andrews-Pfannkoch C."/>
            <person name="Baldwin D."/>
            <person name="Ballew R.M."/>
            <person name="Basu A."/>
            <person name="Baxendale J."/>
            <person name="Bayraktaroglu L."/>
            <person name="Beasley E.M."/>
            <person name="Beeson K.Y."/>
            <person name="Benos P.V."/>
            <person name="Berman B.P."/>
            <person name="Bhandari D."/>
            <person name="Bolshakov S."/>
            <person name="Borkova D."/>
            <person name="Botchan M.R."/>
            <person name="Bouck J."/>
            <person name="Brokstein P."/>
            <person name="Brottier P."/>
            <person name="Burtis K.C."/>
            <person name="Busam D.A."/>
            <person name="Butler H."/>
            <person name="Cadieu E."/>
            <person name="Center A."/>
            <person name="Chandra I."/>
            <person name="Cherry J.M."/>
            <person name="Cawley S."/>
            <person name="Dahlke C."/>
            <person name="Davenport L.B."/>
            <person name="Davies P."/>
            <person name="de Pablos B."/>
            <person name="Delcher A."/>
            <person name="Deng Z."/>
            <person name="Mays A.D."/>
            <person name="Dew I."/>
            <person name="Dietz S.M."/>
            <person name="Dodson K."/>
            <person name="Doup L.E."/>
            <person name="Downes M."/>
            <person name="Dugan-Rocha S."/>
            <person name="Dunkov B.C."/>
            <person name="Dunn P."/>
            <person name="Durbin K.J."/>
            <person name="Evangelista C.C."/>
            <person name="Ferraz C."/>
            <person name="Ferriera S."/>
            <person name="Fleischmann W."/>
            <person name="Fosler C."/>
            <person name="Gabrielian A.E."/>
            <person name="Garg N.S."/>
            <person name="Gelbart W.M."/>
            <person name="Glasser K."/>
            <person name="Glodek A."/>
            <person name="Gong F."/>
            <person name="Gorrell J.H."/>
            <person name="Gu Z."/>
            <person name="Guan P."/>
            <person name="Harris M."/>
            <person name="Harris N.L."/>
            <person name="Harvey D.A."/>
            <person name="Heiman T.J."/>
            <person name="Hernandez J.R."/>
            <person name="Houck J."/>
            <person name="Hostin D."/>
            <person name="Houston K.A."/>
            <person name="Howland T.J."/>
            <person name="Wei M.-H."/>
            <person name="Ibegwam C."/>
            <person name="Jalali M."/>
            <person name="Kalush F."/>
            <person name="Karpen G.H."/>
            <person name="Ke Z."/>
            <person name="Kennison J.A."/>
            <person name="Ketchum K.A."/>
            <person name="Kimmel B.E."/>
            <person name="Kodira C.D."/>
            <person name="Kraft C.L."/>
            <person name="Kravitz S."/>
            <person name="Kulp D."/>
            <person name="Lai Z."/>
            <person name="Lasko P."/>
            <person name="Lei Y."/>
            <person name="Levitsky A.A."/>
            <person name="Li J.H."/>
            <person name="Li Z."/>
            <person name="Liang Y."/>
            <person name="Lin X."/>
            <person name="Liu X."/>
            <person name="Mattei B."/>
            <person name="McIntosh T.C."/>
            <person name="McLeod M.P."/>
            <person name="McPherson D."/>
            <person name="Merkulov G."/>
            <person name="Milshina N.V."/>
            <person name="Mobarry C."/>
            <person name="Morris J."/>
            <person name="Moshrefi A."/>
            <person name="Mount S.M."/>
            <person name="Moy M."/>
            <person name="Murphy B."/>
            <person name="Murphy L."/>
            <person name="Muzny D.M."/>
            <person name="Nelson D.L."/>
            <person name="Nelson D.R."/>
            <person name="Nelson K.A."/>
            <person name="Nixon K."/>
            <person name="Nusskern D.R."/>
            <person name="Pacleb J.M."/>
            <person name="Palazzolo M."/>
            <person name="Pittman G.S."/>
            <person name="Pan S."/>
            <person name="Pollard J."/>
            <person name="Puri V."/>
            <person name="Reese M.G."/>
            <person name="Reinert K."/>
            <person name="Remington K."/>
            <person name="Saunders R.D.C."/>
            <person name="Scheeler F."/>
            <person name="Shen H."/>
            <person name="Shue B.C."/>
            <person name="Siden-Kiamos I."/>
            <person name="Simpson M."/>
            <person name="Skupski M.P."/>
            <person name="Smith T.J."/>
            <person name="Spier E."/>
            <person name="Spradling A.C."/>
            <person name="Stapleton M."/>
            <person name="Strong R."/>
            <person name="Sun E."/>
            <person name="Svirskas R."/>
            <person name="Tector C."/>
            <person name="Turner R."/>
            <person name="Venter E."/>
            <person name="Wang A.H."/>
            <person name="Wang X."/>
            <person name="Wang Z.-Y."/>
            <person name="Wassarman D.A."/>
            <person name="Weinstock G.M."/>
            <person name="Weissenbach J."/>
            <person name="Williams S.M."/>
            <person name="Woodage T."/>
            <person name="Worley K.C."/>
            <person name="Wu D."/>
            <person name="Yang S."/>
            <person name="Yao Q.A."/>
            <person name="Ye J."/>
            <person name="Yeh R.-F."/>
            <person name="Zaveri J.S."/>
            <person name="Zhan M."/>
            <person name="Zhang G."/>
            <person name="Zhao Q."/>
            <person name="Zheng L."/>
            <person name="Zheng X.H."/>
            <person name="Zhong F.N."/>
            <person name="Zhong W."/>
            <person name="Zhou X."/>
            <person name="Zhu S.C."/>
            <person name="Zhu X."/>
            <person name="Smith H.O."/>
            <person name="Gibbs R.A."/>
            <person name="Myers E.W."/>
            <person name="Rubin G.M."/>
            <person name="Venter J.C."/>
        </authorList>
    </citation>
    <scope>NUCLEOTIDE SEQUENCE [LARGE SCALE GENOMIC DNA]</scope>
    <source>
        <strain>Berkeley</strain>
    </source>
</reference>
<reference key="4">
    <citation type="journal article" date="2002" name="Genome Biol.">
        <title>Annotation of the Drosophila melanogaster euchromatic genome: a systematic review.</title>
        <authorList>
            <person name="Misra S."/>
            <person name="Crosby M.A."/>
            <person name="Mungall C.J."/>
            <person name="Matthews B.B."/>
            <person name="Campbell K.S."/>
            <person name="Hradecky P."/>
            <person name="Huang Y."/>
            <person name="Kaminker J.S."/>
            <person name="Millburn G.H."/>
            <person name="Prochnik S.E."/>
            <person name="Smith C.D."/>
            <person name="Tupy J.L."/>
            <person name="Whitfield E.J."/>
            <person name="Bayraktaroglu L."/>
            <person name="Berman B.P."/>
            <person name="Bettencourt B.R."/>
            <person name="Celniker S.E."/>
            <person name="de Grey A.D.N.J."/>
            <person name="Drysdale R.A."/>
            <person name="Harris N.L."/>
            <person name="Richter J."/>
            <person name="Russo S."/>
            <person name="Schroeder A.J."/>
            <person name="Shu S.Q."/>
            <person name="Stapleton M."/>
            <person name="Yamada C."/>
            <person name="Ashburner M."/>
            <person name="Gelbart W.M."/>
            <person name="Rubin G.M."/>
            <person name="Lewis S.E."/>
        </authorList>
    </citation>
    <scope>GENOME REANNOTATION</scope>
    <source>
        <strain>Berkeley</strain>
    </source>
</reference>
<reference key="5">
    <citation type="journal article" date="2002" name="Genome Biol.">
        <title>A Drosophila full-length cDNA resource.</title>
        <authorList>
            <person name="Stapleton M."/>
            <person name="Carlson J.W."/>
            <person name="Brokstein P."/>
            <person name="Yu C."/>
            <person name="Champe M."/>
            <person name="George R.A."/>
            <person name="Guarin H."/>
            <person name="Kronmiller B."/>
            <person name="Pacleb J.M."/>
            <person name="Park S."/>
            <person name="Wan K.H."/>
            <person name="Rubin G.M."/>
            <person name="Celniker S.E."/>
        </authorList>
    </citation>
    <scope>NUCLEOTIDE SEQUENCE [LARGE SCALE MRNA] (ISOFORM 3)</scope>
    <source>
        <strain>Berkeley</strain>
        <tissue>Embryo</tissue>
    </source>
</reference>
<reference key="6">
    <citation type="submission" date="2004-10" db="EMBL/GenBank/DDBJ databases">
        <authorList>
            <person name="Stapleton M."/>
            <person name="Carlson J.W."/>
            <person name="Chavez C."/>
            <person name="Frise E."/>
            <person name="George R.A."/>
            <person name="Pacleb J.M."/>
            <person name="Park S."/>
            <person name="Wan K.H."/>
            <person name="Yu C."/>
            <person name="Rubin G.M."/>
            <person name="Celniker S.E."/>
        </authorList>
    </citation>
    <scope>NUCLEOTIDE SEQUENCE [LARGE SCALE MRNA] (ISOFORM 1)</scope>
    <source>
        <strain>Berkeley</strain>
        <tissue>Testis</tissue>
    </source>
</reference>
<reference key="7">
    <citation type="journal article" date="2000" name="Dev. Biol.">
        <title>The maternal effect mutation sesame affects the formation of the male pronucleus in Drosophila melanogaster.</title>
        <authorList>
            <person name="Loppin B."/>
            <person name="Docquier M."/>
            <person name="Bonneton F."/>
            <person name="Couble P."/>
        </authorList>
    </citation>
    <scope>FUNCTION</scope>
</reference>
<reference key="8">
    <citation type="journal article" date="2001" name="Chromosoma">
        <title>The Drosophila maternal gene sesame is required for sperm chromatin remodeling at fertilization.</title>
        <authorList>
            <person name="Loppin B."/>
            <person name="Berger F."/>
            <person name="Couble P."/>
        </authorList>
    </citation>
    <scope>FUNCTION</scope>
</reference>
<reference key="9">
    <citation type="journal article" date="2005" name="Mol. Cell. Biol.">
        <title>Replacement by Drosophila melanogaster protamines and Mst77F of histones during chromatin condensation in late spermatids and role of sesame in the removal of these proteins from the male pronucleus.</title>
        <authorList>
            <person name="Jayaramaiah Raja S."/>
            <person name="Renkawitz-Pohl R."/>
        </authorList>
    </citation>
    <scope>FUNCTION</scope>
</reference>
<reference key="10">
    <citation type="journal article" date="2006" name="Mol. Cell. Biol.">
        <authorList>
            <person name="Jayaramaiah Raja S."/>
            <person name="Renkawitz-Pohl R."/>
        </authorList>
    </citation>
    <scope>ERRATUM OF PUBMED:15988027</scope>
</reference>
<reference key="11">
    <citation type="journal article" date="2005" name="Nature">
        <title>The histone H3.3 chaperone HIRA is essential for chromatin assembly in the male pronucleus.</title>
        <authorList>
            <person name="Loppin B."/>
            <person name="Bonnefoy E."/>
            <person name="Anselme C."/>
            <person name="Laurencon A."/>
            <person name="Karr T.L."/>
            <person name="Couble P."/>
        </authorList>
    </citation>
    <scope>FUNCTION</scope>
    <scope>SUBCELLULAR LOCATION</scope>
    <scope>MUTAGENESIS OF ARG-225</scope>
</reference>
<reference key="12">
    <citation type="journal article" date="2007" name="Mol. Biosyst.">
        <title>An integrated chemical, mass spectrometric and computational strategy for (quantitative) phosphoproteomics: application to Drosophila melanogaster Kc167 cells.</title>
        <authorList>
            <person name="Bodenmiller B."/>
            <person name="Mueller L.N."/>
            <person name="Pedrioli P.G.A."/>
            <person name="Pflieger D."/>
            <person name="Juenger M.A."/>
            <person name="Eng J.K."/>
            <person name="Aebersold R."/>
            <person name="Tao W.A."/>
        </authorList>
    </citation>
    <scope>PHOSPHORYLATION [LARGE SCALE ANALYSIS] AT SER-519</scope>
    <scope>IDENTIFICATION BY MASS SPECTROMETRY</scope>
</reference>
<comment type="function">
    <text evidence="1 3 4 5 6">Required for the periodic repression of histone gene transcription during the cell cycle (By similarity). Required for replication-independent chromatin assembly. Promotes remodeling of sperm chromatin following fertilization via the incorporation of histone H3.3 and histone H4.</text>
</comment>
<comment type="subcellular location">
    <subcellularLocation>
        <location evidence="6">Nucleus</location>
    </subcellularLocation>
    <text>Maternally contributed protein localizes specifically to the male nucleus in fertilized eggs. This localization persists from the initiation of sperm nucleus decondensation to the end of pronucleus formation.</text>
</comment>
<comment type="alternative products">
    <event type="alternative splicing"/>
    <isoform>
        <id>O17468-1</id>
        <name>1</name>
        <name>Long</name>
        <sequence type="displayed"/>
    </isoform>
    <isoform>
        <id>O17468-2</id>
        <name>2</name>
        <name>Short</name>
        <sequence type="described" ref="VSP_006775 VSP_006776 VSP_006777"/>
    </isoform>
    <isoform>
        <id>O17468-3</id>
        <name>3</name>
        <sequence type="described" ref="VSP_006776 VSP_006777"/>
    </isoform>
</comment>
<comment type="developmental stage">
    <text evidence="8 9">Expressed maternally and zygotically throughout development to adults (male and female).</text>
</comment>
<comment type="similarity">
    <text evidence="13">Belongs to the WD repeat HIR1 family.</text>
</comment>
<comment type="caution">
    <text evidence="10">Was originally thought to be involved in protamine removal but this was shown to be incorrect in the subsequent published erratum.</text>
</comment>
<comment type="sequence caution" evidence="13">
    <conflict type="frameshift">
        <sequence resource="EMBL-CDS" id="AAC48360"/>
    </conflict>
</comment>
<name>HIRA_DROME</name>
<proteinExistence type="evidence at protein level"/>
<protein>
    <recommendedName>
        <fullName>Protein HIRA homolog</fullName>
    </recommendedName>
    <alternativeName>
        <fullName>Protein sesame</fullName>
    </alternativeName>
    <alternativeName>
        <fullName>dHIRA</fullName>
    </alternativeName>
</protein>
<accession>O17468</accession>
<accession>O46105</accession>
<accession>O77144</accession>
<accession>Q5U0S5</accession>
<accession>Q8T0C3</accession>
<accession>Q9W3Q3</accession>
<feature type="chain" id="PRO_0000051022" description="Protein HIRA homolog">
    <location>
        <begin position="1"/>
        <end position="1047"/>
    </location>
</feature>
<feature type="repeat" description="WD 1">
    <location>
        <begin position="11"/>
        <end position="53"/>
    </location>
</feature>
<feature type="repeat" description="WD 2">
    <location>
        <begin position="68"/>
        <end position="107"/>
    </location>
</feature>
<feature type="repeat" description="WD 3">
    <location>
        <begin position="127"/>
        <end position="166"/>
    </location>
</feature>
<feature type="repeat" description="WD 4">
    <location>
        <begin position="170"/>
        <end position="209"/>
    </location>
</feature>
<feature type="repeat" description="WD 5">
    <location>
        <begin position="218"/>
        <end position="263"/>
    </location>
</feature>
<feature type="repeat" description="WD 6">
    <location>
        <begin position="264"/>
        <end position="319"/>
    </location>
</feature>
<feature type="repeat" description="WD 7">
    <location>
        <begin position="323"/>
        <end position="364"/>
    </location>
</feature>
<feature type="region of interest" description="Disordered" evidence="2">
    <location>
        <begin position="401"/>
        <end position="435"/>
    </location>
</feature>
<feature type="region of interest" description="Disordered" evidence="2">
    <location>
        <begin position="509"/>
        <end position="549"/>
    </location>
</feature>
<feature type="region of interest" description="Disordered" evidence="2">
    <location>
        <begin position="882"/>
        <end position="914"/>
    </location>
</feature>
<feature type="region of interest" description="Disordered" evidence="2">
    <location>
        <begin position="933"/>
        <end position="1047"/>
    </location>
</feature>
<feature type="compositionally biased region" description="Polar residues" evidence="2">
    <location>
        <begin position="409"/>
        <end position="424"/>
    </location>
</feature>
<feature type="compositionally biased region" description="Polar residues" evidence="2">
    <location>
        <begin position="509"/>
        <end position="518"/>
    </location>
</feature>
<feature type="compositionally biased region" description="Polar residues" evidence="2">
    <location>
        <begin position="889"/>
        <end position="901"/>
    </location>
</feature>
<feature type="compositionally biased region" description="Low complexity" evidence="2">
    <location>
        <begin position="933"/>
        <end position="972"/>
    </location>
</feature>
<feature type="compositionally biased region" description="Low complexity" evidence="2">
    <location>
        <begin position="1015"/>
        <end position="1047"/>
    </location>
</feature>
<feature type="modified residue" description="Phosphoserine" evidence="7">
    <location>
        <position position="519"/>
    </location>
</feature>
<feature type="splice variant" id="VSP_006775" description="In isoform 2." evidence="12">
    <original>L</original>
    <variation>LPVLSDKAEFDADVPKML</variation>
    <location>
        <position position="63"/>
    </location>
</feature>
<feature type="splice variant" id="VSP_006776" description="In isoform 2 and isoform 3." evidence="11 12">
    <original>KDGKRRIT</original>
    <variation>LSLICKIF</variation>
    <location>
        <begin position="430"/>
        <end position="437"/>
    </location>
</feature>
<feature type="splice variant" id="VSP_006777" description="In isoform 2 and isoform 3." evidence="11 12">
    <location>
        <begin position="438"/>
        <end position="1047"/>
    </location>
</feature>
<feature type="mutagenesis site" description="In allele ssm; maternal effect embryonic lethal mutation which impairs maternal histone deposition in the male pronucleus." evidence="6">
    <original>R</original>
    <variation>K</variation>
    <location>
        <position position="225"/>
    </location>
</feature>
<feature type="sequence conflict" description="In Ref. 1; AAC48360." evidence="13" ref="1">
    <original>A</original>
    <variation>G</variation>
    <location>
        <position position="53"/>
    </location>
</feature>
<feature type="sequence conflict" description="In Ref. 1; AAC48360." evidence="13" ref="1">
    <original>D</original>
    <variation>E</variation>
    <location>
        <position position="58"/>
    </location>
</feature>
<feature type="sequence conflict" description="In Ref. 1; AAC48360." evidence="13" ref="1">
    <original>C</original>
    <variation>G</variation>
    <location>
        <position position="64"/>
    </location>
</feature>
<feature type="sequence conflict" description="In Ref. 1; AAC48360." evidence="13" ref="1">
    <original>C</original>
    <variation>S</variation>
    <location>
        <position position="72"/>
    </location>
</feature>
<feature type="sequence conflict" description="In Ref. 2; AAC64041." evidence="13" ref="2">
    <original>QAFPH</original>
    <variation>RHFHN</variation>
    <location>
        <begin position="159"/>
        <end position="163"/>
    </location>
</feature>
<feature type="sequence conflict" description="In Ref. 2; AAC64041." evidence="13" ref="2">
    <original>K</original>
    <variation>E</variation>
    <location>
        <position position="169"/>
    </location>
</feature>
<feature type="sequence conflict" description="In Ref. 1; AAC48360." evidence="13" ref="1">
    <original>S</original>
    <variation>W</variation>
    <location>
        <position position="179"/>
    </location>
</feature>
<feature type="sequence conflict" description="In Ref. 2; AAC64041." evidence="13" ref="2">
    <original>G</original>
    <variation>A</variation>
    <location>
        <position position="232"/>
    </location>
</feature>
<feature type="sequence conflict" description="In Ref. 2; CAA10954." evidence="13" ref="2">
    <original>N</original>
    <variation>D</variation>
    <location>
        <position position="242"/>
    </location>
</feature>
<feature type="sequence conflict" description="In Ref. 1; AAC48360." evidence="13" ref="1">
    <original>D</original>
    <variation>Y</variation>
    <location>
        <position position="330"/>
    </location>
</feature>
<feature type="sequence conflict" description="In Ref. 1; AAC48360." evidence="13" ref="1">
    <original>A</original>
    <variation>V</variation>
    <location>
        <position position="416"/>
    </location>
</feature>
<feature type="sequence conflict" description="In Ref. 6; AAV37052." evidence="13" ref="6">
    <original>N</original>
    <variation>I</variation>
    <location>
        <position position="417"/>
    </location>
</feature>
<feature type="sequence conflict" description="In Ref. 6; AAV37052." evidence="13" ref="6">
    <original>L</original>
    <variation>M</variation>
    <location>
        <position position="451"/>
    </location>
</feature>
<feature type="sequence conflict" description="In Ref. 1; AAC48360." evidence="13" ref="1">
    <original>MNI</original>
    <variation>LNF</variation>
    <location>
        <begin position="453"/>
        <end position="455"/>
    </location>
</feature>
<feature type="sequence conflict" description="In Ref. 2; CAA10954." evidence="13" ref="2">
    <original>S</original>
    <variation>R</variation>
    <location>
        <position position="459"/>
    </location>
</feature>
<feature type="sequence conflict" description="In Ref. 1; AAC48360." evidence="13" ref="1">
    <original>L</original>
    <variation>V</variation>
    <location>
        <position position="536"/>
    </location>
</feature>
<feature type="sequence conflict" description="In Ref. 6; AAV37052." evidence="13" ref="6">
    <original>S</original>
    <variation>T</variation>
    <location>
        <position position="830"/>
    </location>
</feature>
<feature type="sequence conflict" description="In Ref. 6; AAV37052." evidence="13" ref="6">
    <original>QKT</original>
    <variation>PKA</variation>
    <location>
        <begin position="890"/>
        <end position="892"/>
    </location>
</feature>
<feature type="sequence conflict" description="In Ref. 1; AAC48360." evidence="13" ref="1">
    <original>K</original>
    <variation>Q</variation>
    <location>
        <position position="1043"/>
    </location>
</feature>